<dbReference type="EC" id="2.7.12.1"/>
<dbReference type="EMBL" id="D45355">
    <property type="protein sequence ID" value="BAA08216.1"/>
    <property type="molecule type" value="mRNA"/>
</dbReference>
<dbReference type="EMBL" id="AL022537">
    <property type="protein sequence ID" value="CAA18595.1"/>
    <property type="molecule type" value="Genomic_DNA"/>
</dbReference>
<dbReference type="EMBL" id="AL161581">
    <property type="protein sequence ID" value="CAB79983.1"/>
    <property type="molecule type" value="Genomic_DNA"/>
</dbReference>
<dbReference type="EMBL" id="CP002687">
    <property type="protein sequence ID" value="AEE86100.1"/>
    <property type="molecule type" value="Genomic_DNA"/>
</dbReference>
<dbReference type="EMBL" id="U16178">
    <property type="protein sequence ID" value="AAA57119.1"/>
    <property type="molecule type" value="mRNA"/>
</dbReference>
<dbReference type="PIR" id="T04460">
    <property type="entry name" value="T04460"/>
</dbReference>
<dbReference type="RefSeq" id="NP_194992.1">
    <molecule id="P51568-1"/>
    <property type="nucleotide sequence ID" value="NM_119418.3"/>
</dbReference>
<dbReference type="SMR" id="P51568"/>
<dbReference type="BioGRID" id="14687">
    <property type="interactions" value="8"/>
</dbReference>
<dbReference type="FunCoup" id="P51568">
    <property type="interactions" value="3429"/>
</dbReference>
<dbReference type="IntAct" id="P51568">
    <property type="interactions" value="2"/>
</dbReference>
<dbReference type="STRING" id="3702.P51568"/>
<dbReference type="iPTMnet" id="P51568"/>
<dbReference type="PaxDb" id="3702-AT4G32660.1"/>
<dbReference type="EnsemblPlants" id="AT4G32660.1">
    <molecule id="P51568-1"/>
    <property type="protein sequence ID" value="AT4G32660.1"/>
    <property type="gene ID" value="AT4G32660"/>
</dbReference>
<dbReference type="GeneID" id="829401"/>
<dbReference type="Gramene" id="AT4G32660.1">
    <molecule id="P51568-1"/>
    <property type="protein sequence ID" value="AT4G32660.1"/>
    <property type="gene ID" value="AT4G32660"/>
</dbReference>
<dbReference type="KEGG" id="ath:AT4G32660"/>
<dbReference type="Araport" id="AT4G32660"/>
<dbReference type="TAIR" id="AT4G32660">
    <property type="gene designation" value="AME3"/>
</dbReference>
<dbReference type="eggNOG" id="KOG0671">
    <property type="taxonomic scope" value="Eukaryota"/>
</dbReference>
<dbReference type="InParanoid" id="P51568"/>
<dbReference type="PhylomeDB" id="P51568"/>
<dbReference type="BRENDA" id="2.7.12.1">
    <property type="organism ID" value="399"/>
</dbReference>
<dbReference type="PRO" id="PR:P51568"/>
<dbReference type="Proteomes" id="UP000006548">
    <property type="component" value="Chromosome 4"/>
</dbReference>
<dbReference type="ExpressionAtlas" id="P51568">
    <property type="expression patterns" value="baseline and differential"/>
</dbReference>
<dbReference type="GO" id="GO:0005524">
    <property type="term" value="F:ATP binding"/>
    <property type="evidence" value="ECO:0007669"/>
    <property type="project" value="UniProtKB-KW"/>
</dbReference>
<dbReference type="GO" id="GO:0106310">
    <property type="term" value="F:protein serine kinase activity"/>
    <property type="evidence" value="ECO:0007669"/>
    <property type="project" value="RHEA"/>
</dbReference>
<dbReference type="GO" id="GO:0004674">
    <property type="term" value="F:protein serine/threonine kinase activity"/>
    <property type="evidence" value="ECO:0007005"/>
    <property type="project" value="TAIR"/>
</dbReference>
<dbReference type="GO" id="GO:0004712">
    <property type="term" value="F:protein serine/threonine/tyrosine kinase activity"/>
    <property type="evidence" value="ECO:0007669"/>
    <property type="project" value="UniProtKB-EC"/>
</dbReference>
<dbReference type="GO" id="GO:0004713">
    <property type="term" value="F:protein tyrosine kinase activity"/>
    <property type="evidence" value="ECO:0007669"/>
    <property type="project" value="RHEA"/>
</dbReference>
<dbReference type="GO" id="GO:0046777">
    <property type="term" value="P:protein autophosphorylation"/>
    <property type="evidence" value="ECO:0007005"/>
    <property type="project" value="TAIR"/>
</dbReference>
<dbReference type="CDD" id="cd14134">
    <property type="entry name" value="PKc_CLK"/>
    <property type="match status" value="1"/>
</dbReference>
<dbReference type="FunFam" id="1.10.510.10:FF:000612">
    <property type="entry name" value="Serine/threonine-protein kinase AFC2"/>
    <property type="match status" value="1"/>
</dbReference>
<dbReference type="FunFam" id="3.30.200.20:FF:000463">
    <property type="entry name" value="Serine/threonine-protein kinase AFC2"/>
    <property type="match status" value="1"/>
</dbReference>
<dbReference type="Gene3D" id="3.30.200.20">
    <property type="entry name" value="Phosphorylase Kinase, domain 1"/>
    <property type="match status" value="1"/>
</dbReference>
<dbReference type="Gene3D" id="1.10.510.10">
    <property type="entry name" value="Transferase(Phosphotransferase) domain 1"/>
    <property type="match status" value="1"/>
</dbReference>
<dbReference type="InterPro" id="IPR051175">
    <property type="entry name" value="CLK_kinases"/>
</dbReference>
<dbReference type="InterPro" id="IPR011009">
    <property type="entry name" value="Kinase-like_dom_sf"/>
</dbReference>
<dbReference type="InterPro" id="IPR000719">
    <property type="entry name" value="Prot_kinase_dom"/>
</dbReference>
<dbReference type="InterPro" id="IPR008271">
    <property type="entry name" value="Ser/Thr_kinase_AS"/>
</dbReference>
<dbReference type="PANTHER" id="PTHR45646">
    <property type="entry name" value="SERINE/THREONINE-PROTEIN KINASE DOA-RELATED"/>
    <property type="match status" value="1"/>
</dbReference>
<dbReference type="PANTHER" id="PTHR45646:SF11">
    <property type="entry name" value="SERINE_THREONINE-PROTEIN KINASE DOA"/>
    <property type="match status" value="1"/>
</dbReference>
<dbReference type="Pfam" id="PF00069">
    <property type="entry name" value="Pkinase"/>
    <property type="match status" value="1"/>
</dbReference>
<dbReference type="SMART" id="SM00220">
    <property type="entry name" value="S_TKc"/>
    <property type="match status" value="1"/>
</dbReference>
<dbReference type="SUPFAM" id="SSF56112">
    <property type="entry name" value="Protein kinase-like (PK-like)"/>
    <property type="match status" value="1"/>
</dbReference>
<dbReference type="PROSITE" id="PS50011">
    <property type="entry name" value="PROTEIN_KINASE_DOM"/>
    <property type="match status" value="1"/>
</dbReference>
<dbReference type="PROSITE" id="PS00108">
    <property type="entry name" value="PROTEIN_KINASE_ST"/>
    <property type="match status" value="1"/>
</dbReference>
<gene>
    <name type="primary">AFC3</name>
    <name type="synonym">AME3</name>
    <name type="ordered locus">At4g32660</name>
    <name type="ORF">F4D11.140</name>
</gene>
<feature type="chain" id="PRO_0000085602" description="Serine/threonine-protein kinase AFC3">
    <location>
        <begin position="1"/>
        <end position="400"/>
    </location>
</feature>
<feature type="domain" description="Protein kinase" evidence="1">
    <location>
        <begin position="71"/>
        <end position="396"/>
    </location>
</feature>
<feature type="region of interest" description="Disordered" evidence="3">
    <location>
        <begin position="1"/>
        <end position="29"/>
    </location>
</feature>
<feature type="active site" description="Proton acceptor" evidence="1 2">
    <location>
        <position position="196"/>
    </location>
</feature>
<feature type="binding site" evidence="1">
    <location>
        <begin position="77"/>
        <end position="85"/>
    </location>
    <ligand>
        <name>ATP</name>
        <dbReference type="ChEBI" id="CHEBI:30616"/>
    </ligand>
</feature>
<feature type="binding site" evidence="1">
    <location>
        <position position="100"/>
    </location>
    <ligand>
        <name>ATP</name>
        <dbReference type="ChEBI" id="CHEBI:30616"/>
    </ligand>
</feature>
<feature type="sequence conflict" description="In Ref. 4; AAA57119." evidence="4" ref="4">
    <original>S</original>
    <variation>N</variation>
    <location>
        <position position="8"/>
    </location>
</feature>
<accession>P51568</accession>
<accession>Q39185</accession>
<keyword id="KW-0025">Alternative splicing</keyword>
<keyword id="KW-0067">ATP-binding</keyword>
<keyword id="KW-0418">Kinase</keyword>
<keyword id="KW-0547">Nucleotide-binding</keyword>
<keyword id="KW-1185">Reference proteome</keyword>
<keyword id="KW-0723">Serine/threonine-protein kinase</keyword>
<keyword id="KW-0808">Transferase</keyword>
<sequence>MIANGFESMDKERVRKRPRMTWDEAPAEPEAKRAVIKGHGSDGRILSPPLRDDDRDGHYVFSLRDNLTPRYKILSKMGEGTFGRVLECWDRDTKEYVAIKIIRSIKKYRDAAMIEIDVLQKLVKSDKGRTRCVQMKNWFDYRNHICIVFEKLGPSLFDFLKRNKYSAFPLALVRDFGCQLLESVAYMHELQLVHTDLKPENILLVSSENVKLPDNKRSAANETHFRCLPKSSAIKLIDFGSTVCDNRIHHSIVQTRHYRSPEVILGLGWSYQCDLWSIGCILFELCTGEALFQTHDNLEHLAMMERALGPLPEHMTRKASRGAEKYFRRGCRLNWPEGANSRESIRAVKRLDRLKDMVSKHVDNTRSRFADLLYGLLAYDPSERLTANEALDHPFFKSSS</sequence>
<reference key="1">
    <citation type="submission" date="1995-02" db="EMBL/GenBank/DDBJ databases">
        <title>A.thaliana genes encoding protein kinases of a new family.</title>
        <authorList>
            <person name="Kuromori T."/>
            <person name="Yamamoto M."/>
        </authorList>
    </citation>
    <scope>NUCLEOTIDE SEQUENCE [MRNA]</scope>
</reference>
<reference key="2">
    <citation type="journal article" date="1999" name="Nature">
        <title>Sequence and analysis of chromosome 4 of the plant Arabidopsis thaliana.</title>
        <authorList>
            <person name="Mayer K.F.X."/>
            <person name="Schueller C."/>
            <person name="Wambutt R."/>
            <person name="Murphy G."/>
            <person name="Volckaert G."/>
            <person name="Pohl T."/>
            <person name="Duesterhoeft A."/>
            <person name="Stiekema W."/>
            <person name="Entian K.-D."/>
            <person name="Terryn N."/>
            <person name="Harris B."/>
            <person name="Ansorge W."/>
            <person name="Brandt P."/>
            <person name="Grivell L.A."/>
            <person name="Rieger M."/>
            <person name="Weichselgartner M."/>
            <person name="de Simone V."/>
            <person name="Obermaier B."/>
            <person name="Mache R."/>
            <person name="Mueller M."/>
            <person name="Kreis M."/>
            <person name="Delseny M."/>
            <person name="Puigdomenech P."/>
            <person name="Watson M."/>
            <person name="Schmidtheini T."/>
            <person name="Reichert B."/>
            <person name="Portetelle D."/>
            <person name="Perez-Alonso M."/>
            <person name="Boutry M."/>
            <person name="Bancroft I."/>
            <person name="Vos P."/>
            <person name="Hoheisel J."/>
            <person name="Zimmermann W."/>
            <person name="Wedler H."/>
            <person name="Ridley P."/>
            <person name="Langham S.-A."/>
            <person name="McCullagh B."/>
            <person name="Bilham L."/>
            <person name="Robben J."/>
            <person name="van der Schueren J."/>
            <person name="Grymonprez B."/>
            <person name="Chuang Y.-J."/>
            <person name="Vandenbussche F."/>
            <person name="Braeken M."/>
            <person name="Weltjens I."/>
            <person name="Voet M."/>
            <person name="Bastiaens I."/>
            <person name="Aert R."/>
            <person name="Defoor E."/>
            <person name="Weitzenegger T."/>
            <person name="Bothe G."/>
            <person name="Ramsperger U."/>
            <person name="Hilbert H."/>
            <person name="Braun M."/>
            <person name="Holzer E."/>
            <person name="Brandt A."/>
            <person name="Peters S."/>
            <person name="van Staveren M."/>
            <person name="Dirkse W."/>
            <person name="Mooijman P."/>
            <person name="Klein Lankhorst R."/>
            <person name="Rose M."/>
            <person name="Hauf J."/>
            <person name="Koetter P."/>
            <person name="Berneiser S."/>
            <person name="Hempel S."/>
            <person name="Feldpausch M."/>
            <person name="Lamberth S."/>
            <person name="Van den Daele H."/>
            <person name="De Keyser A."/>
            <person name="Buysshaert C."/>
            <person name="Gielen J."/>
            <person name="Villarroel R."/>
            <person name="De Clercq R."/>
            <person name="van Montagu M."/>
            <person name="Rogers J."/>
            <person name="Cronin A."/>
            <person name="Quail M.A."/>
            <person name="Bray-Allen S."/>
            <person name="Clark L."/>
            <person name="Doggett J."/>
            <person name="Hall S."/>
            <person name="Kay M."/>
            <person name="Lennard N."/>
            <person name="McLay K."/>
            <person name="Mayes R."/>
            <person name="Pettett A."/>
            <person name="Rajandream M.A."/>
            <person name="Lyne M."/>
            <person name="Benes V."/>
            <person name="Rechmann S."/>
            <person name="Borkova D."/>
            <person name="Bloecker H."/>
            <person name="Scharfe M."/>
            <person name="Grimm M."/>
            <person name="Loehnert T.-H."/>
            <person name="Dose S."/>
            <person name="de Haan M."/>
            <person name="Maarse A.C."/>
            <person name="Schaefer M."/>
            <person name="Mueller-Auer S."/>
            <person name="Gabel C."/>
            <person name="Fuchs M."/>
            <person name="Fartmann B."/>
            <person name="Granderath K."/>
            <person name="Dauner D."/>
            <person name="Herzl A."/>
            <person name="Neumann S."/>
            <person name="Argiriou A."/>
            <person name="Vitale D."/>
            <person name="Liguori R."/>
            <person name="Piravandi E."/>
            <person name="Massenet O."/>
            <person name="Quigley F."/>
            <person name="Clabauld G."/>
            <person name="Muendlein A."/>
            <person name="Felber R."/>
            <person name="Schnabl S."/>
            <person name="Hiller R."/>
            <person name="Schmidt W."/>
            <person name="Lecharny A."/>
            <person name="Aubourg S."/>
            <person name="Chefdor F."/>
            <person name="Cooke R."/>
            <person name="Berger C."/>
            <person name="Monfort A."/>
            <person name="Casacuberta E."/>
            <person name="Gibbons T."/>
            <person name="Weber N."/>
            <person name="Vandenbol M."/>
            <person name="Bargues M."/>
            <person name="Terol J."/>
            <person name="Torres A."/>
            <person name="Perez-Perez A."/>
            <person name="Purnelle B."/>
            <person name="Bent E."/>
            <person name="Johnson S."/>
            <person name="Tacon D."/>
            <person name="Jesse T."/>
            <person name="Heijnen L."/>
            <person name="Schwarz S."/>
            <person name="Scholler P."/>
            <person name="Heber S."/>
            <person name="Francs P."/>
            <person name="Bielke C."/>
            <person name="Frishman D."/>
            <person name="Haase D."/>
            <person name="Lemcke K."/>
            <person name="Mewes H.-W."/>
            <person name="Stocker S."/>
            <person name="Zaccaria P."/>
            <person name="Bevan M."/>
            <person name="Wilson R.K."/>
            <person name="de la Bastide M."/>
            <person name="Habermann K."/>
            <person name="Parnell L."/>
            <person name="Dedhia N."/>
            <person name="Gnoj L."/>
            <person name="Schutz K."/>
            <person name="Huang E."/>
            <person name="Spiegel L."/>
            <person name="Sekhon M."/>
            <person name="Murray J."/>
            <person name="Sheet P."/>
            <person name="Cordes M."/>
            <person name="Abu-Threideh J."/>
            <person name="Stoneking T."/>
            <person name="Kalicki J."/>
            <person name="Graves T."/>
            <person name="Harmon G."/>
            <person name="Edwards J."/>
            <person name="Latreille P."/>
            <person name="Courtney L."/>
            <person name="Cloud J."/>
            <person name="Abbott A."/>
            <person name="Scott K."/>
            <person name="Johnson D."/>
            <person name="Minx P."/>
            <person name="Bentley D."/>
            <person name="Fulton B."/>
            <person name="Miller N."/>
            <person name="Greco T."/>
            <person name="Kemp K."/>
            <person name="Kramer J."/>
            <person name="Fulton L."/>
            <person name="Mardis E."/>
            <person name="Dante M."/>
            <person name="Pepin K."/>
            <person name="Hillier L.W."/>
            <person name="Nelson J."/>
            <person name="Spieth J."/>
            <person name="Ryan E."/>
            <person name="Andrews S."/>
            <person name="Geisel C."/>
            <person name="Layman D."/>
            <person name="Du H."/>
            <person name="Ali J."/>
            <person name="Berghoff A."/>
            <person name="Jones K."/>
            <person name="Drone K."/>
            <person name="Cotton M."/>
            <person name="Joshu C."/>
            <person name="Antonoiu B."/>
            <person name="Zidanic M."/>
            <person name="Strong C."/>
            <person name="Sun H."/>
            <person name="Lamar B."/>
            <person name="Yordan C."/>
            <person name="Ma P."/>
            <person name="Zhong J."/>
            <person name="Preston R."/>
            <person name="Vil D."/>
            <person name="Shekher M."/>
            <person name="Matero A."/>
            <person name="Shah R."/>
            <person name="Swaby I.K."/>
            <person name="O'Shaughnessy A."/>
            <person name="Rodriguez M."/>
            <person name="Hoffman J."/>
            <person name="Till S."/>
            <person name="Granat S."/>
            <person name="Shohdy N."/>
            <person name="Hasegawa A."/>
            <person name="Hameed A."/>
            <person name="Lodhi M."/>
            <person name="Johnson A."/>
            <person name="Chen E."/>
            <person name="Marra M.A."/>
            <person name="Martienssen R."/>
            <person name="McCombie W.R."/>
        </authorList>
    </citation>
    <scope>NUCLEOTIDE SEQUENCE [LARGE SCALE GENOMIC DNA]</scope>
    <source>
        <strain>cv. Columbia</strain>
    </source>
</reference>
<reference key="3">
    <citation type="journal article" date="2017" name="Plant J.">
        <title>Araport11: a complete reannotation of the Arabidopsis thaliana reference genome.</title>
        <authorList>
            <person name="Cheng C.Y."/>
            <person name="Krishnakumar V."/>
            <person name="Chan A.P."/>
            <person name="Thibaud-Nissen F."/>
            <person name="Schobel S."/>
            <person name="Town C.D."/>
        </authorList>
    </citation>
    <scope>GENOME REANNOTATION</scope>
    <source>
        <strain>cv. Columbia</strain>
    </source>
</reference>
<reference key="4">
    <citation type="journal article" date="1994" name="Proc. Natl. Acad. Sci. U.S.A.">
        <title>AFC1, a LAMMER kinase from Arabidopsis thaliana, activates STE12-dependent processes in yeast.</title>
        <authorList>
            <person name="Bender J."/>
            <person name="Fink G.R."/>
        </authorList>
    </citation>
    <scope>NUCLEOTIDE SEQUENCE [MRNA] OF 6-400</scope>
    <source>
        <strain>cv. Landsberg erecta</strain>
    </source>
</reference>
<proteinExistence type="evidence at protein level"/>
<organism>
    <name type="scientific">Arabidopsis thaliana</name>
    <name type="common">Mouse-ear cress</name>
    <dbReference type="NCBI Taxonomy" id="3702"/>
    <lineage>
        <taxon>Eukaryota</taxon>
        <taxon>Viridiplantae</taxon>
        <taxon>Streptophyta</taxon>
        <taxon>Embryophyta</taxon>
        <taxon>Tracheophyta</taxon>
        <taxon>Spermatophyta</taxon>
        <taxon>Magnoliopsida</taxon>
        <taxon>eudicotyledons</taxon>
        <taxon>Gunneridae</taxon>
        <taxon>Pentapetalae</taxon>
        <taxon>rosids</taxon>
        <taxon>malvids</taxon>
        <taxon>Brassicales</taxon>
        <taxon>Brassicaceae</taxon>
        <taxon>Camelineae</taxon>
        <taxon>Arabidopsis</taxon>
    </lineage>
</organism>
<evidence type="ECO:0000255" key="1">
    <source>
        <dbReference type="PROSITE-ProRule" id="PRU00159"/>
    </source>
</evidence>
<evidence type="ECO:0000255" key="2">
    <source>
        <dbReference type="PROSITE-ProRule" id="PRU10027"/>
    </source>
</evidence>
<evidence type="ECO:0000256" key="3">
    <source>
        <dbReference type="SAM" id="MobiDB-lite"/>
    </source>
</evidence>
<evidence type="ECO:0000305" key="4"/>
<name>AFC3_ARATH</name>
<comment type="catalytic activity">
    <reaction>
        <text>L-seryl-[protein] + ATP = O-phospho-L-seryl-[protein] + ADP + H(+)</text>
        <dbReference type="Rhea" id="RHEA:17989"/>
        <dbReference type="Rhea" id="RHEA-COMP:9863"/>
        <dbReference type="Rhea" id="RHEA-COMP:11604"/>
        <dbReference type="ChEBI" id="CHEBI:15378"/>
        <dbReference type="ChEBI" id="CHEBI:29999"/>
        <dbReference type="ChEBI" id="CHEBI:30616"/>
        <dbReference type="ChEBI" id="CHEBI:83421"/>
        <dbReference type="ChEBI" id="CHEBI:456216"/>
        <dbReference type="EC" id="2.7.12.1"/>
    </reaction>
</comment>
<comment type="catalytic activity">
    <reaction>
        <text>L-threonyl-[protein] + ATP = O-phospho-L-threonyl-[protein] + ADP + H(+)</text>
        <dbReference type="Rhea" id="RHEA:46608"/>
        <dbReference type="Rhea" id="RHEA-COMP:11060"/>
        <dbReference type="Rhea" id="RHEA-COMP:11605"/>
        <dbReference type="ChEBI" id="CHEBI:15378"/>
        <dbReference type="ChEBI" id="CHEBI:30013"/>
        <dbReference type="ChEBI" id="CHEBI:30616"/>
        <dbReference type="ChEBI" id="CHEBI:61977"/>
        <dbReference type="ChEBI" id="CHEBI:456216"/>
        <dbReference type="EC" id="2.7.12.1"/>
    </reaction>
</comment>
<comment type="catalytic activity">
    <reaction>
        <text>L-tyrosyl-[protein] + ATP = O-phospho-L-tyrosyl-[protein] + ADP + H(+)</text>
        <dbReference type="Rhea" id="RHEA:10596"/>
        <dbReference type="Rhea" id="RHEA-COMP:10136"/>
        <dbReference type="Rhea" id="RHEA-COMP:20101"/>
        <dbReference type="ChEBI" id="CHEBI:15378"/>
        <dbReference type="ChEBI" id="CHEBI:30616"/>
        <dbReference type="ChEBI" id="CHEBI:46858"/>
        <dbReference type="ChEBI" id="CHEBI:61978"/>
        <dbReference type="ChEBI" id="CHEBI:456216"/>
        <dbReference type="EC" id="2.7.12.1"/>
    </reaction>
</comment>
<comment type="interaction">
    <interactant intactId="EBI-25519318">
        <id>P51568</id>
    </interactant>
    <interactant intactId="EBI-927132">
        <id>P92964</id>
        <label>RS31</label>
    </interactant>
    <organismsDiffer>false</organismsDiffer>
    <experiments>3</experiments>
</comment>
<comment type="interaction">
    <interactant intactId="EBI-25519318">
        <id>P51568</id>
    </interactant>
    <interactant intactId="EBI-927172">
        <id>O81127</id>
        <label>RSZ21</label>
    </interactant>
    <organismsDiffer>false</organismsDiffer>
    <experiments>3</experiments>
</comment>
<comment type="alternative products">
    <event type="alternative splicing"/>
    <isoform>
        <id>P51568-1</id>
        <name>1</name>
        <sequence type="displayed"/>
    </isoform>
    <text>A number of isoforms are produced. According to EST sequences.</text>
</comment>
<comment type="similarity">
    <text evidence="4">Belongs to the protein kinase superfamily. CMGC Ser/Thr protein kinase family. Lammer subfamily.</text>
</comment>
<protein>
    <recommendedName>
        <fullName>Serine/threonine-protein kinase AFC3</fullName>
        <ecNumber>2.7.12.1</ecNumber>
    </recommendedName>
</protein>